<dbReference type="EC" id="4.2.1.33" evidence="1"/>
<dbReference type="EMBL" id="CP000750">
    <property type="protein sequence ID" value="ABS02846.1"/>
    <property type="molecule type" value="Genomic_DNA"/>
</dbReference>
<dbReference type="RefSeq" id="WP_012084291.1">
    <property type="nucleotide sequence ID" value="NC_009664.2"/>
</dbReference>
<dbReference type="SMR" id="A6W7Q7"/>
<dbReference type="STRING" id="266940.Krad_1358"/>
<dbReference type="KEGG" id="kra:Krad_1358"/>
<dbReference type="eggNOG" id="COG0065">
    <property type="taxonomic scope" value="Bacteria"/>
</dbReference>
<dbReference type="HOGENOM" id="CLU_006714_3_4_11"/>
<dbReference type="OrthoDB" id="9802769at2"/>
<dbReference type="UniPathway" id="UPA00048">
    <property type="reaction ID" value="UER00071"/>
</dbReference>
<dbReference type="Proteomes" id="UP000001116">
    <property type="component" value="Chromosome"/>
</dbReference>
<dbReference type="GO" id="GO:0003861">
    <property type="term" value="F:3-isopropylmalate dehydratase activity"/>
    <property type="evidence" value="ECO:0007669"/>
    <property type="project" value="UniProtKB-UniRule"/>
</dbReference>
<dbReference type="GO" id="GO:0051539">
    <property type="term" value="F:4 iron, 4 sulfur cluster binding"/>
    <property type="evidence" value="ECO:0007669"/>
    <property type="project" value="UniProtKB-KW"/>
</dbReference>
<dbReference type="GO" id="GO:0046872">
    <property type="term" value="F:metal ion binding"/>
    <property type="evidence" value="ECO:0007669"/>
    <property type="project" value="UniProtKB-KW"/>
</dbReference>
<dbReference type="GO" id="GO:0009098">
    <property type="term" value="P:L-leucine biosynthetic process"/>
    <property type="evidence" value="ECO:0007669"/>
    <property type="project" value="UniProtKB-UniRule"/>
</dbReference>
<dbReference type="CDD" id="cd01583">
    <property type="entry name" value="IPMI"/>
    <property type="match status" value="1"/>
</dbReference>
<dbReference type="FunFam" id="3.30.499.10:FF:000007">
    <property type="entry name" value="3-isopropylmalate dehydratase large subunit"/>
    <property type="match status" value="1"/>
</dbReference>
<dbReference type="Gene3D" id="3.30.499.10">
    <property type="entry name" value="Aconitase, domain 3"/>
    <property type="match status" value="2"/>
</dbReference>
<dbReference type="HAMAP" id="MF_01026">
    <property type="entry name" value="LeuC_type1"/>
    <property type="match status" value="1"/>
</dbReference>
<dbReference type="InterPro" id="IPR004430">
    <property type="entry name" value="3-IsopropMal_deHydase_lsu"/>
</dbReference>
<dbReference type="InterPro" id="IPR015931">
    <property type="entry name" value="Acnase/IPM_dHydase_lsu_aba_1/3"/>
</dbReference>
<dbReference type="InterPro" id="IPR001030">
    <property type="entry name" value="Acoase/IPM_deHydtase_lsu_aba"/>
</dbReference>
<dbReference type="InterPro" id="IPR018136">
    <property type="entry name" value="Aconitase_4Fe-4S_BS"/>
</dbReference>
<dbReference type="InterPro" id="IPR036008">
    <property type="entry name" value="Aconitase_4Fe-4S_dom"/>
</dbReference>
<dbReference type="InterPro" id="IPR050067">
    <property type="entry name" value="IPM_dehydratase_rel_enz"/>
</dbReference>
<dbReference type="InterPro" id="IPR033941">
    <property type="entry name" value="IPMI_cat"/>
</dbReference>
<dbReference type="NCBIfam" id="TIGR00170">
    <property type="entry name" value="leuC"/>
    <property type="match status" value="1"/>
</dbReference>
<dbReference type="NCBIfam" id="NF004016">
    <property type="entry name" value="PRK05478.1"/>
    <property type="match status" value="1"/>
</dbReference>
<dbReference type="NCBIfam" id="NF009116">
    <property type="entry name" value="PRK12466.1"/>
    <property type="match status" value="1"/>
</dbReference>
<dbReference type="PANTHER" id="PTHR43822:SF9">
    <property type="entry name" value="3-ISOPROPYLMALATE DEHYDRATASE"/>
    <property type="match status" value="1"/>
</dbReference>
<dbReference type="PANTHER" id="PTHR43822">
    <property type="entry name" value="HOMOACONITASE, MITOCHONDRIAL-RELATED"/>
    <property type="match status" value="1"/>
</dbReference>
<dbReference type="Pfam" id="PF00330">
    <property type="entry name" value="Aconitase"/>
    <property type="match status" value="1"/>
</dbReference>
<dbReference type="PRINTS" id="PR00415">
    <property type="entry name" value="ACONITASE"/>
</dbReference>
<dbReference type="SUPFAM" id="SSF53732">
    <property type="entry name" value="Aconitase iron-sulfur domain"/>
    <property type="match status" value="1"/>
</dbReference>
<dbReference type="PROSITE" id="PS00450">
    <property type="entry name" value="ACONITASE_1"/>
    <property type="match status" value="1"/>
</dbReference>
<dbReference type="PROSITE" id="PS01244">
    <property type="entry name" value="ACONITASE_2"/>
    <property type="match status" value="1"/>
</dbReference>
<keyword id="KW-0004">4Fe-4S</keyword>
<keyword id="KW-0028">Amino-acid biosynthesis</keyword>
<keyword id="KW-0100">Branched-chain amino acid biosynthesis</keyword>
<keyword id="KW-0408">Iron</keyword>
<keyword id="KW-0411">Iron-sulfur</keyword>
<keyword id="KW-0432">Leucine biosynthesis</keyword>
<keyword id="KW-0456">Lyase</keyword>
<keyword id="KW-0479">Metal-binding</keyword>
<keyword id="KW-1185">Reference proteome</keyword>
<name>LEUC_KINRD</name>
<proteinExistence type="inferred from homology"/>
<gene>
    <name evidence="1" type="primary">leuC</name>
    <name type="ordered locus">Krad_1358</name>
</gene>
<feature type="chain" id="PRO_1000135688" description="3-isopropylmalate dehydratase large subunit">
    <location>
        <begin position="1"/>
        <end position="477"/>
    </location>
</feature>
<feature type="binding site" evidence="1">
    <location>
        <position position="351"/>
    </location>
    <ligand>
        <name>[4Fe-4S] cluster</name>
        <dbReference type="ChEBI" id="CHEBI:49883"/>
    </ligand>
</feature>
<feature type="binding site" evidence="1">
    <location>
        <position position="411"/>
    </location>
    <ligand>
        <name>[4Fe-4S] cluster</name>
        <dbReference type="ChEBI" id="CHEBI:49883"/>
    </ligand>
</feature>
<feature type="binding site" evidence="1">
    <location>
        <position position="414"/>
    </location>
    <ligand>
        <name>[4Fe-4S] cluster</name>
        <dbReference type="ChEBI" id="CHEBI:49883"/>
    </ligand>
</feature>
<comment type="function">
    <text evidence="1">Catalyzes the isomerization between 2-isopropylmalate and 3-isopropylmalate, via the formation of 2-isopropylmaleate.</text>
</comment>
<comment type="catalytic activity">
    <reaction evidence="1">
        <text>(2R,3S)-3-isopropylmalate = (2S)-2-isopropylmalate</text>
        <dbReference type="Rhea" id="RHEA:32287"/>
        <dbReference type="ChEBI" id="CHEBI:1178"/>
        <dbReference type="ChEBI" id="CHEBI:35121"/>
        <dbReference type="EC" id="4.2.1.33"/>
    </reaction>
</comment>
<comment type="cofactor">
    <cofactor evidence="1">
        <name>[4Fe-4S] cluster</name>
        <dbReference type="ChEBI" id="CHEBI:49883"/>
    </cofactor>
    <text evidence="1">Binds 1 [4Fe-4S] cluster per subunit.</text>
</comment>
<comment type="pathway">
    <text evidence="1">Amino-acid biosynthesis; L-leucine biosynthesis; L-leucine from 3-methyl-2-oxobutanoate: step 2/4.</text>
</comment>
<comment type="subunit">
    <text evidence="1">Heterodimer of LeuC and LeuD.</text>
</comment>
<comment type="similarity">
    <text evidence="1">Belongs to the aconitase/IPM isomerase family. LeuC type 1 subfamily.</text>
</comment>
<reference key="1">
    <citation type="journal article" date="2008" name="PLoS ONE">
        <title>Survival in nuclear waste, extreme resistance, and potential applications gleaned from the genome sequence of Kineococcus radiotolerans SRS30216.</title>
        <authorList>
            <person name="Bagwell C.E."/>
            <person name="Bhat S."/>
            <person name="Hawkins G.M."/>
            <person name="Smith B.W."/>
            <person name="Biswas T."/>
            <person name="Hoover T.R."/>
            <person name="Saunders E."/>
            <person name="Han C.S."/>
            <person name="Tsodikov O.V."/>
            <person name="Shimkets L.J."/>
        </authorList>
    </citation>
    <scope>NUCLEOTIDE SEQUENCE [LARGE SCALE GENOMIC DNA]</scope>
    <source>
        <strain>ATCC BAA-149 / DSM 14245 / SRS30216</strain>
    </source>
</reference>
<evidence type="ECO:0000255" key="1">
    <source>
        <dbReference type="HAMAP-Rule" id="MF_01026"/>
    </source>
</evidence>
<protein>
    <recommendedName>
        <fullName evidence="1">3-isopropylmalate dehydratase large subunit</fullName>
        <ecNumber evidence="1">4.2.1.33</ecNumber>
    </recommendedName>
    <alternativeName>
        <fullName evidence="1">Alpha-IPM isomerase</fullName>
        <shortName evidence="1">IPMI</shortName>
    </alternativeName>
    <alternativeName>
        <fullName evidence="1">Isopropylmalate isomerase</fullName>
    </alternativeName>
</protein>
<sequence>MARTLAEKVWDDHVVRKGQDGEPDLLYIDLHLVHEVTSPQAFDGLRAAGRPVRRLDLTIATEDHNTPTVDIDRPLSLLEDKTSAKQLQTLRENCAEFGVRLHPLGDAEQGIVHVVGPQLGLTQPGMTVVCGDSHTSTHGAFGSLGMGIGTSEVEHVLATQTLPLKPFKTMAITVDGTLKPGTTAKDVILAVIAEIGTGGGQGYVLEYRGEAIRNLSMEGRMTICNMSIEAGARAGMVAPDETTFAYLEGRPHAPQGADWDAAVEYWRTLRTDDDAEFDAEVVLDGSALEPFVTWGTNPGQGVPLSGSVPEPERIGDDGVRQGVERALEYMGLEGGTPMRDIAVDTVFIGSCTNSRIEDLRAAADVVRGRRKADSVRVMVVPGSAKVRLQAEAEGIDTVFKEFGADWRFAGCSMCLGMNPDQLAPGERCASTSNRNFEGRQGKGGRTHLVSPLVAAATAVRGTLSSPADLEPPVPTNV</sequence>
<accession>A6W7Q7</accession>
<organism>
    <name type="scientific">Kineococcus radiotolerans (strain ATCC BAA-149 / DSM 14245 / SRS30216)</name>
    <dbReference type="NCBI Taxonomy" id="266940"/>
    <lineage>
        <taxon>Bacteria</taxon>
        <taxon>Bacillati</taxon>
        <taxon>Actinomycetota</taxon>
        <taxon>Actinomycetes</taxon>
        <taxon>Kineosporiales</taxon>
        <taxon>Kineosporiaceae</taxon>
        <taxon>Kineococcus</taxon>
    </lineage>
</organism>